<gene>
    <name evidence="1" type="primary">argG</name>
    <name type="ordered locus">RC1_2886</name>
</gene>
<keyword id="KW-0028">Amino-acid biosynthesis</keyword>
<keyword id="KW-0055">Arginine biosynthesis</keyword>
<keyword id="KW-0067">ATP-binding</keyword>
<keyword id="KW-0963">Cytoplasm</keyword>
<keyword id="KW-0436">Ligase</keyword>
<keyword id="KW-0547">Nucleotide-binding</keyword>
<keyword id="KW-1185">Reference proteome</keyword>
<protein>
    <recommendedName>
        <fullName evidence="1">Argininosuccinate synthase</fullName>
        <ecNumber evidence="1">6.3.4.5</ecNumber>
    </recommendedName>
    <alternativeName>
        <fullName evidence="1">Citrulline--aspartate ligase</fullName>
    </alternativeName>
</protein>
<feature type="chain" id="PRO_1000089052" description="Argininosuccinate synthase">
    <location>
        <begin position="1"/>
        <end position="406"/>
    </location>
</feature>
<feature type="binding site" evidence="1">
    <location>
        <begin position="11"/>
        <end position="19"/>
    </location>
    <ligand>
        <name>ATP</name>
        <dbReference type="ChEBI" id="CHEBI:30616"/>
    </ligand>
</feature>
<feature type="binding site" evidence="1">
    <location>
        <position position="38"/>
    </location>
    <ligand>
        <name>ATP</name>
        <dbReference type="ChEBI" id="CHEBI:30616"/>
    </ligand>
</feature>
<feature type="binding site" evidence="1">
    <location>
        <position position="91"/>
    </location>
    <ligand>
        <name>L-citrulline</name>
        <dbReference type="ChEBI" id="CHEBI:57743"/>
    </ligand>
</feature>
<feature type="binding site" evidence="1">
    <location>
        <position position="96"/>
    </location>
    <ligand>
        <name>L-citrulline</name>
        <dbReference type="ChEBI" id="CHEBI:57743"/>
    </ligand>
</feature>
<feature type="binding site" evidence="1">
    <location>
        <position position="121"/>
    </location>
    <ligand>
        <name>ATP</name>
        <dbReference type="ChEBI" id="CHEBI:30616"/>
    </ligand>
</feature>
<feature type="binding site" evidence="1">
    <location>
        <position position="123"/>
    </location>
    <ligand>
        <name>L-aspartate</name>
        <dbReference type="ChEBI" id="CHEBI:29991"/>
    </ligand>
</feature>
<feature type="binding site" evidence="1">
    <location>
        <position position="127"/>
    </location>
    <ligand>
        <name>L-aspartate</name>
        <dbReference type="ChEBI" id="CHEBI:29991"/>
    </ligand>
</feature>
<feature type="binding site" evidence="1">
    <location>
        <position position="127"/>
    </location>
    <ligand>
        <name>L-citrulline</name>
        <dbReference type="ChEBI" id="CHEBI:57743"/>
    </ligand>
</feature>
<feature type="binding site" evidence="1">
    <location>
        <position position="128"/>
    </location>
    <ligand>
        <name>L-aspartate</name>
        <dbReference type="ChEBI" id="CHEBI:29991"/>
    </ligand>
</feature>
<feature type="binding site" evidence="1">
    <location>
        <position position="131"/>
    </location>
    <ligand>
        <name>L-citrulline</name>
        <dbReference type="ChEBI" id="CHEBI:57743"/>
    </ligand>
</feature>
<feature type="binding site" evidence="1">
    <location>
        <position position="182"/>
    </location>
    <ligand>
        <name>L-citrulline</name>
        <dbReference type="ChEBI" id="CHEBI:57743"/>
    </ligand>
</feature>
<feature type="binding site" evidence="1">
    <location>
        <position position="191"/>
    </location>
    <ligand>
        <name>L-citrulline</name>
        <dbReference type="ChEBI" id="CHEBI:57743"/>
    </ligand>
</feature>
<feature type="binding site" evidence="1">
    <location>
        <position position="267"/>
    </location>
    <ligand>
        <name>L-citrulline</name>
        <dbReference type="ChEBI" id="CHEBI:57743"/>
    </ligand>
</feature>
<feature type="binding site" evidence="1">
    <location>
        <position position="279"/>
    </location>
    <ligand>
        <name>L-citrulline</name>
        <dbReference type="ChEBI" id="CHEBI:57743"/>
    </ligand>
</feature>
<evidence type="ECO:0000255" key="1">
    <source>
        <dbReference type="HAMAP-Rule" id="MF_00005"/>
    </source>
</evidence>
<proteinExistence type="inferred from homology"/>
<organism>
    <name type="scientific">Rhodospirillum centenum (strain ATCC 51521 / SW)</name>
    <dbReference type="NCBI Taxonomy" id="414684"/>
    <lineage>
        <taxon>Bacteria</taxon>
        <taxon>Pseudomonadati</taxon>
        <taxon>Pseudomonadota</taxon>
        <taxon>Alphaproteobacteria</taxon>
        <taxon>Rhodospirillales</taxon>
        <taxon>Rhodospirillaceae</taxon>
        <taxon>Rhodospirillum</taxon>
    </lineage>
</organism>
<name>ASSY_RHOCS</name>
<sequence length="406" mass="45455">MTSGVKKVVLAYSGGLDTSVILKWLQETYRCEVVTFTADLGQGEELEPARAKAQMLGIRPENIFIDDLREEFVRDFVFPMFRANTLYEGTYLLGTSIARPLISKRQIEIANLVGADAVAHGATGKGNDQVRFELGYYALKPDVRVIAPWREWQLNSRTALLDFAEKHQIPIAKDKRGEAPYSTDANLLHISYEGKALEDPWVEPDEDMFTRSVAPEKAPDEPEYVEIEFAKGDPVAVNGQRLSPAALLTELNRLGGKHGIGRLDLVENRFVGMKSRGVYETPGGTLLSVAHRGMESITLDREAMHLKDEVMPRYAKLIYNGFWFSPEREALQALIDSTQARVNGVVRLKLFKGSARVVGRQSPNSLYRLDYVTFEADSVYNQKDAEGFIKLNALRLRLGTIAKQKG</sequence>
<comment type="catalytic activity">
    <reaction evidence="1">
        <text>L-citrulline + L-aspartate + ATP = 2-(N(omega)-L-arginino)succinate + AMP + diphosphate + H(+)</text>
        <dbReference type="Rhea" id="RHEA:10932"/>
        <dbReference type="ChEBI" id="CHEBI:15378"/>
        <dbReference type="ChEBI" id="CHEBI:29991"/>
        <dbReference type="ChEBI" id="CHEBI:30616"/>
        <dbReference type="ChEBI" id="CHEBI:33019"/>
        <dbReference type="ChEBI" id="CHEBI:57472"/>
        <dbReference type="ChEBI" id="CHEBI:57743"/>
        <dbReference type="ChEBI" id="CHEBI:456215"/>
        <dbReference type="EC" id="6.3.4.5"/>
    </reaction>
</comment>
<comment type="pathway">
    <text evidence="1">Amino-acid biosynthesis; L-arginine biosynthesis; L-arginine from L-ornithine and carbamoyl phosphate: step 2/3.</text>
</comment>
<comment type="subunit">
    <text evidence="1">Homotetramer.</text>
</comment>
<comment type="subcellular location">
    <subcellularLocation>
        <location evidence="1">Cytoplasm</location>
    </subcellularLocation>
</comment>
<comment type="similarity">
    <text evidence="1">Belongs to the argininosuccinate synthase family. Type 1 subfamily.</text>
</comment>
<dbReference type="EC" id="6.3.4.5" evidence="1"/>
<dbReference type="EMBL" id="CP000613">
    <property type="protein sequence ID" value="ACJ00254.1"/>
    <property type="molecule type" value="Genomic_DNA"/>
</dbReference>
<dbReference type="RefSeq" id="WP_012568034.1">
    <property type="nucleotide sequence ID" value="NC_011420.2"/>
</dbReference>
<dbReference type="SMR" id="B6IVD0"/>
<dbReference type="STRING" id="414684.RC1_2886"/>
<dbReference type="KEGG" id="rce:RC1_2886"/>
<dbReference type="eggNOG" id="COG0137">
    <property type="taxonomic scope" value="Bacteria"/>
</dbReference>
<dbReference type="HOGENOM" id="CLU_032784_4_2_5"/>
<dbReference type="OrthoDB" id="9801641at2"/>
<dbReference type="UniPathway" id="UPA00068">
    <property type="reaction ID" value="UER00113"/>
</dbReference>
<dbReference type="Proteomes" id="UP000001591">
    <property type="component" value="Chromosome"/>
</dbReference>
<dbReference type="GO" id="GO:0005737">
    <property type="term" value="C:cytoplasm"/>
    <property type="evidence" value="ECO:0007669"/>
    <property type="project" value="UniProtKB-SubCell"/>
</dbReference>
<dbReference type="GO" id="GO:0004055">
    <property type="term" value="F:argininosuccinate synthase activity"/>
    <property type="evidence" value="ECO:0007669"/>
    <property type="project" value="UniProtKB-UniRule"/>
</dbReference>
<dbReference type="GO" id="GO:0005524">
    <property type="term" value="F:ATP binding"/>
    <property type="evidence" value="ECO:0007669"/>
    <property type="project" value="UniProtKB-UniRule"/>
</dbReference>
<dbReference type="GO" id="GO:0000053">
    <property type="term" value="P:argininosuccinate metabolic process"/>
    <property type="evidence" value="ECO:0007669"/>
    <property type="project" value="TreeGrafter"/>
</dbReference>
<dbReference type="GO" id="GO:0006526">
    <property type="term" value="P:L-arginine biosynthetic process"/>
    <property type="evidence" value="ECO:0007669"/>
    <property type="project" value="UniProtKB-UniRule"/>
</dbReference>
<dbReference type="GO" id="GO:0000050">
    <property type="term" value="P:urea cycle"/>
    <property type="evidence" value="ECO:0007669"/>
    <property type="project" value="TreeGrafter"/>
</dbReference>
<dbReference type="CDD" id="cd01999">
    <property type="entry name" value="ASS"/>
    <property type="match status" value="1"/>
</dbReference>
<dbReference type="FunFam" id="3.40.50.620:FF:000019">
    <property type="entry name" value="Argininosuccinate synthase"/>
    <property type="match status" value="1"/>
</dbReference>
<dbReference type="FunFam" id="3.90.1260.10:FF:000007">
    <property type="entry name" value="Argininosuccinate synthase"/>
    <property type="match status" value="1"/>
</dbReference>
<dbReference type="Gene3D" id="3.90.1260.10">
    <property type="entry name" value="Argininosuccinate synthetase, chain A, domain 2"/>
    <property type="match status" value="1"/>
</dbReference>
<dbReference type="Gene3D" id="3.40.50.620">
    <property type="entry name" value="HUPs"/>
    <property type="match status" value="1"/>
</dbReference>
<dbReference type="Gene3D" id="1.20.5.470">
    <property type="entry name" value="Single helix bin"/>
    <property type="match status" value="1"/>
</dbReference>
<dbReference type="HAMAP" id="MF_00005">
    <property type="entry name" value="Arg_succ_synth_type1"/>
    <property type="match status" value="1"/>
</dbReference>
<dbReference type="InterPro" id="IPR048268">
    <property type="entry name" value="Arginosuc_syn_C"/>
</dbReference>
<dbReference type="InterPro" id="IPR048267">
    <property type="entry name" value="Arginosuc_syn_N"/>
</dbReference>
<dbReference type="InterPro" id="IPR001518">
    <property type="entry name" value="Arginosuc_synth"/>
</dbReference>
<dbReference type="InterPro" id="IPR018223">
    <property type="entry name" value="Arginosuc_synth_CS"/>
</dbReference>
<dbReference type="InterPro" id="IPR023434">
    <property type="entry name" value="Arginosuc_synth_type_1_subfam"/>
</dbReference>
<dbReference type="InterPro" id="IPR024074">
    <property type="entry name" value="AS_cat/multimer_dom_body"/>
</dbReference>
<dbReference type="InterPro" id="IPR014729">
    <property type="entry name" value="Rossmann-like_a/b/a_fold"/>
</dbReference>
<dbReference type="NCBIfam" id="TIGR00032">
    <property type="entry name" value="argG"/>
    <property type="match status" value="1"/>
</dbReference>
<dbReference type="NCBIfam" id="NF001770">
    <property type="entry name" value="PRK00509.1"/>
    <property type="match status" value="1"/>
</dbReference>
<dbReference type="PANTHER" id="PTHR11587">
    <property type="entry name" value="ARGININOSUCCINATE SYNTHASE"/>
    <property type="match status" value="1"/>
</dbReference>
<dbReference type="PANTHER" id="PTHR11587:SF2">
    <property type="entry name" value="ARGININOSUCCINATE SYNTHASE"/>
    <property type="match status" value="1"/>
</dbReference>
<dbReference type="Pfam" id="PF20979">
    <property type="entry name" value="Arginosuc_syn_C"/>
    <property type="match status" value="1"/>
</dbReference>
<dbReference type="Pfam" id="PF00764">
    <property type="entry name" value="Arginosuc_synth"/>
    <property type="match status" value="1"/>
</dbReference>
<dbReference type="SUPFAM" id="SSF52402">
    <property type="entry name" value="Adenine nucleotide alpha hydrolases-like"/>
    <property type="match status" value="1"/>
</dbReference>
<dbReference type="SUPFAM" id="SSF69864">
    <property type="entry name" value="Argininosuccinate synthetase, C-terminal domain"/>
    <property type="match status" value="1"/>
</dbReference>
<dbReference type="PROSITE" id="PS00564">
    <property type="entry name" value="ARGININOSUCCIN_SYN_1"/>
    <property type="match status" value="1"/>
</dbReference>
<dbReference type="PROSITE" id="PS00565">
    <property type="entry name" value="ARGININOSUCCIN_SYN_2"/>
    <property type="match status" value="1"/>
</dbReference>
<accession>B6IVD0</accession>
<reference key="1">
    <citation type="submission" date="2007-03" db="EMBL/GenBank/DDBJ databases">
        <title>Genome sequence of Rhodospirillum centenum.</title>
        <authorList>
            <person name="Touchman J.W."/>
            <person name="Bauer C."/>
            <person name="Blankenship R.E."/>
        </authorList>
    </citation>
    <scope>NUCLEOTIDE SEQUENCE [LARGE SCALE GENOMIC DNA]</scope>
    <source>
        <strain>ATCC 51521 / SW</strain>
    </source>
</reference>